<sequence length="191" mass="21703">MSKARRWVIIVLSLAVLVMIGINMAEKDDTAQVVVNNNDPTYKSEHTDTLVYNPEGALSYRLIAQHVEYYSDQAVSWFTQPVLTTFDKDKIPTWSVKADKAKLTNDRMLYLYGHVEVNALVPDSQLRRITTDNAQINLVTQDVTSEDLVTLYGTTFNSSGLKMRGNLRSKNAELIEKVRTSYEIQNKQTQP</sequence>
<reference key="1">
    <citation type="journal article" date="2001" name="Nature">
        <title>Genome sequence of enterohaemorrhagic Escherichia coli O157:H7.</title>
        <authorList>
            <person name="Perna N.T."/>
            <person name="Plunkett G. III"/>
            <person name="Burland V."/>
            <person name="Mau B."/>
            <person name="Glasner J.D."/>
            <person name="Rose D.J."/>
            <person name="Mayhew G.F."/>
            <person name="Evans P.S."/>
            <person name="Gregor J."/>
            <person name="Kirkpatrick H.A."/>
            <person name="Posfai G."/>
            <person name="Hackett J."/>
            <person name="Klink S."/>
            <person name="Boutin A."/>
            <person name="Shao Y."/>
            <person name="Miller L."/>
            <person name="Grotbeck E.J."/>
            <person name="Davis N.W."/>
            <person name="Lim A."/>
            <person name="Dimalanta E.T."/>
            <person name="Potamousis K."/>
            <person name="Apodaca J."/>
            <person name="Anantharaman T.S."/>
            <person name="Lin J."/>
            <person name="Yen G."/>
            <person name="Schwartz D.C."/>
            <person name="Welch R.A."/>
            <person name="Blattner F.R."/>
        </authorList>
    </citation>
    <scope>NUCLEOTIDE SEQUENCE [LARGE SCALE GENOMIC DNA]</scope>
    <source>
        <strain>O157:H7 / EDL933 / ATCC 700927 / EHEC</strain>
    </source>
</reference>
<reference key="2">
    <citation type="journal article" date="2001" name="DNA Res.">
        <title>Complete genome sequence of enterohemorrhagic Escherichia coli O157:H7 and genomic comparison with a laboratory strain K-12.</title>
        <authorList>
            <person name="Hayashi T."/>
            <person name="Makino K."/>
            <person name="Ohnishi M."/>
            <person name="Kurokawa K."/>
            <person name="Ishii K."/>
            <person name="Yokoyama K."/>
            <person name="Han C.-G."/>
            <person name="Ohtsubo E."/>
            <person name="Nakayama K."/>
            <person name="Murata T."/>
            <person name="Tanaka M."/>
            <person name="Tobe T."/>
            <person name="Iida T."/>
            <person name="Takami H."/>
            <person name="Honda T."/>
            <person name="Sasakawa C."/>
            <person name="Ogasawara N."/>
            <person name="Yasunaga T."/>
            <person name="Kuhara S."/>
            <person name="Shiba T."/>
            <person name="Hattori M."/>
            <person name="Shinagawa H."/>
        </authorList>
    </citation>
    <scope>NUCLEOTIDE SEQUENCE [LARGE SCALE GENOMIC DNA]</scope>
    <source>
        <strain>O157:H7 / Sakai / RIMD 0509952 / EHEC</strain>
    </source>
</reference>
<feature type="chain" id="PRO_0000169471" description="Lipopolysaccharide export system protein LptC">
    <location>
        <begin position="1"/>
        <end position="191"/>
    </location>
</feature>
<feature type="transmembrane region" description="Helical" evidence="1">
    <location>
        <begin position="7"/>
        <end position="25"/>
    </location>
</feature>
<evidence type="ECO:0000255" key="1">
    <source>
        <dbReference type="HAMAP-Rule" id="MF_01915"/>
    </source>
</evidence>
<name>LPTC_ECO57</name>
<organism>
    <name type="scientific">Escherichia coli O157:H7</name>
    <dbReference type="NCBI Taxonomy" id="83334"/>
    <lineage>
        <taxon>Bacteria</taxon>
        <taxon>Pseudomonadati</taxon>
        <taxon>Pseudomonadota</taxon>
        <taxon>Gammaproteobacteria</taxon>
        <taxon>Enterobacterales</taxon>
        <taxon>Enterobacteriaceae</taxon>
        <taxon>Escherichia</taxon>
    </lineage>
</organism>
<comment type="function">
    <text evidence="1">Involved in the assembly of lipopolysaccharide (LPS). Required for the translocation of LPS from the inner membrane to the outer membrane. Facilitates the transfer of LPS from the inner membrane to the periplasmic protein LptA. Could be a docking site for LptA.</text>
</comment>
<comment type="subunit">
    <text evidence="1">Component of the lipopolysaccharide transport and assembly complex. Interacts with LptA and the LptBFG transporter complex.</text>
</comment>
<comment type="subcellular location">
    <subcellularLocation>
        <location evidence="1">Cell inner membrane</location>
        <topology evidence="1">Single-pass membrane protein</topology>
    </subcellularLocation>
</comment>
<comment type="similarity">
    <text evidence="1">Belongs to the LptC family.</text>
</comment>
<proteinExistence type="inferred from homology"/>
<dbReference type="EMBL" id="AE005174">
    <property type="protein sequence ID" value="AAG58333.1"/>
    <property type="molecule type" value="Genomic_DNA"/>
</dbReference>
<dbReference type="EMBL" id="BA000007">
    <property type="protein sequence ID" value="BAB37501.1"/>
    <property type="molecule type" value="Genomic_DNA"/>
</dbReference>
<dbReference type="PIR" id="A85984">
    <property type="entry name" value="A85984"/>
</dbReference>
<dbReference type="PIR" id="F91138">
    <property type="entry name" value="F91138"/>
</dbReference>
<dbReference type="RefSeq" id="NP_312105.1">
    <property type="nucleotide sequence ID" value="NC_002695.1"/>
</dbReference>
<dbReference type="RefSeq" id="WP_000030537.1">
    <property type="nucleotide sequence ID" value="NZ_VOAI01000014.1"/>
</dbReference>
<dbReference type="SMR" id="P0ADW1"/>
<dbReference type="STRING" id="155864.Z4562"/>
<dbReference type="GeneID" id="75206055"/>
<dbReference type="GeneID" id="916076"/>
<dbReference type="KEGG" id="ece:Z4562"/>
<dbReference type="KEGG" id="ecs:ECs_4078"/>
<dbReference type="PATRIC" id="fig|386585.9.peg.4257"/>
<dbReference type="eggNOG" id="COG3117">
    <property type="taxonomic scope" value="Bacteria"/>
</dbReference>
<dbReference type="HOGENOM" id="CLU_105814_2_1_6"/>
<dbReference type="OMA" id="WFTQPVM"/>
<dbReference type="Proteomes" id="UP000000558">
    <property type="component" value="Chromosome"/>
</dbReference>
<dbReference type="Proteomes" id="UP000002519">
    <property type="component" value="Chromosome"/>
</dbReference>
<dbReference type="GO" id="GO:0030288">
    <property type="term" value="C:outer membrane-bounded periplasmic space"/>
    <property type="evidence" value="ECO:0007669"/>
    <property type="project" value="TreeGrafter"/>
</dbReference>
<dbReference type="GO" id="GO:0005886">
    <property type="term" value="C:plasma membrane"/>
    <property type="evidence" value="ECO:0007669"/>
    <property type="project" value="UniProtKB-SubCell"/>
</dbReference>
<dbReference type="GO" id="GO:0017089">
    <property type="term" value="F:glycolipid transfer activity"/>
    <property type="evidence" value="ECO:0007669"/>
    <property type="project" value="TreeGrafter"/>
</dbReference>
<dbReference type="GO" id="GO:0015221">
    <property type="term" value="F:lipopolysaccharide transmembrane transporter activity"/>
    <property type="evidence" value="ECO:0007669"/>
    <property type="project" value="InterPro"/>
</dbReference>
<dbReference type="GO" id="GO:0043165">
    <property type="term" value="P:Gram-negative-bacterium-type cell outer membrane assembly"/>
    <property type="evidence" value="ECO:0007669"/>
    <property type="project" value="UniProtKB-UniRule"/>
</dbReference>
<dbReference type="FunFam" id="2.60.450.10:FF:000001">
    <property type="entry name" value="Lipopolysaccharide export system protein LptC"/>
    <property type="match status" value="1"/>
</dbReference>
<dbReference type="Gene3D" id="2.60.450.10">
    <property type="entry name" value="Lipopolysaccharide (LPS) transport protein A like domain"/>
    <property type="match status" value="1"/>
</dbReference>
<dbReference type="HAMAP" id="MF_01915">
    <property type="entry name" value="LPS_assembly_LptC"/>
    <property type="match status" value="1"/>
</dbReference>
<dbReference type="InterPro" id="IPR010664">
    <property type="entry name" value="LipoPS_assembly_LptC-rel"/>
</dbReference>
<dbReference type="InterPro" id="IPR052363">
    <property type="entry name" value="LPS_export_LptC"/>
</dbReference>
<dbReference type="InterPro" id="IPR026265">
    <property type="entry name" value="LptC"/>
</dbReference>
<dbReference type="NCBIfam" id="TIGR04409">
    <property type="entry name" value="LptC_YrbK"/>
    <property type="match status" value="1"/>
</dbReference>
<dbReference type="NCBIfam" id="NF008142">
    <property type="entry name" value="PRK10893.1"/>
    <property type="match status" value="1"/>
</dbReference>
<dbReference type="PANTHER" id="PTHR37481">
    <property type="entry name" value="LIPOPOLYSACCHARIDE EXPORT SYSTEM PROTEIN LPTC"/>
    <property type="match status" value="1"/>
</dbReference>
<dbReference type="PANTHER" id="PTHR37481:SF1">
    <property type="entry name" value="LIPOPOLYSACCHARIDE EXPORT SYSTEM PROTEIN LPTC"/>
    <property type="match status" value="1"/>
</dbReference>
<dbReference type="Pfam" id="PF06835">
    <property type="entry name" value="LptC"/>
    <property type="match status" value="1"/>
</dbReference>
<dbReference type="PIRSF" id="PIRSF028513">
    <property type="entry name" value="LptC"/>
    <property type="match status" value="1"/>
</dbReference>
<keyword id="KW-0997">Cell inner membrane</keyword>
<keyword id="KW-1003">Cell membrane</keyword>
<keyword id="KW-0472">Membrane</keyword>
<keyword id="KW-1185">Reference proteome</keyword>
<keyword id="KW-0812">Transmembrane</keyword>
<keyword id="KW-1133">Transmembrane helix</keyword>
<protein>
    <recommendedName>
        <fullName evidence="1">Lipopolysaccharide export system protein LptC</fullName>
    </recommendedName>
</protein>
<accession>P0ADW1</accession>
<accession>P45397</accession>
<gene>
    <name evidence="1" type="primary">lptC</name>
    <name type="ordered locus">Z4562</name>
    <name type="ordered locus">ECs4078</name>
</gene>